<name>Y572_RHIWR</name>
<protein>
    <recommendedName>
        <fullName evidence="1">UPF0102 protein Swit_0572</fullName>
    </recommendedName>
</protein>
<gene>
    <name type="ordered locus">Swit_0572</name>
</gene>
<reference key="1">
    <citation type="journal article" date="2010" name="J. Bacteriol.">
        <title>Genome sequence of the dioxin-mineralizing bacterium Sphingomonas wittichii RW1.</title>
        <authorList>
            <person name="Miller T.R."/>
            <person name="Delcher A.L."/>
            <person name="Salzberg S.L."/>
            <person name="Saunders E."/>
            <person name="Detter J.C."/>
            <person name="Halden R.U."/>
        </authorList>
    </citation>
    <scope>NUCLEOTIDE SEQUENCE [LARGE SCALE GENOMIC DNA]</scope>
    <source>
        <strain>DSM 6014 / CCUG 31198 / JCM 15750 / NBRC 105917 / EY 4224 / RW1</strain>
    </source>
</reference>
<keyword id="KW-1185">Reference proteome</keyword>
<proteinExistence type="inferred from homology"/>
<accession>A5V3S4</accession>
<feature type="chain" id="PRO_0000336266" description="UPF0102 protein Swit_0572">
    <location>
        <begin position="1"/>
        <end position="118"/>
    </location>
</feature>
<organism>
    <name type="scientific">Rhizorhabdus wittichii (strain DSM 6014 / CCUG 31198 / JCM 15750 / NBRC 105917 / EY 4224 / RW1)</name>
    <name type="common">Sphingomonas wittichii</name>
    <dbReference type="NCBI Taxonomy" id="392499"/>
    <lineage>
        <taxon>Bacteria</taxon>
        <taxon>Pseudomonadati</taxon>
        <taxon>Pseudomonadota</taxon>
        <taxon>Alphaproteobacteria</taxon>
        <taxon>Sphingomonadales</taxon>
        <taxon>Sphingomonadaceae</taxon>
        <taxon>Rhizorhabdus</taxon>
    </lineage>
</organism>
<sequence length="118" mass="13488">MNRRAAAERQGRTGERIAAWWLRLHGWRIVGSRVKTRRGEVDLIARRGRTLAFVEVKTRGDAAGLATAIDEYRLRRVAAAAEALLPRYGVGVENVRIDVMLVRPWRRPVHLTNVWHGQ</sequence>
<dbReference type="EMBL" id="CP000699">
    <property type="protein sequence ID" value="ABQ66940.1"/>
    <property type="molecule type" value="Genomic_DNA"/>
</dbReference>
<dbReference type="SMR" id="A5V3S4"/>
<dbReference type="STRING" id="392499.Swit_0572"/>
<dbReference type="PaxDb" id="392499-Swit_0572"/>
<dbReference type="KEGG" id="swi:Swit_0572"/>
<dbReference type="eggNOG" id="COG0792">
    <property type="taxonomic scope" value="Bacteria"/>
</dbReference>
<dbReference type="HOGENOM" id="CLU_115353_0_2_5"/>
<dbReference type="OrthoDB" id="9812968at2"/>
<dbReference type="Proteomes" id="UP000001989">
    <property type="component" value="Chromosome"/>
</dbReference>
<dbReference type="GO" id="GO:0003676">
    <property type="term" value="F:nucleic acid binding"/>
    <property type="evidence" value="ECO:0007669"/>
    <property type="project" value="InterPro"/>
</dbReference>
<dbReference type="Gene3D" id="3.40.1350.10">
    <property type="match status" value="1"/>
</dbReference>
<dbReference type="HAMAP" id="MF_00048">
    <property type="entry name" value="UPF0102"/>
    <property type="match status" value="1"/>
</dbReference>
<dbReference type="InterPro" id="IPR011335">
    <property type="entry name" value="Restrct_endonuc-II-like"/>
</dbReference>
<dbReference type="InterPro" id="IPR011856">
    <property type="entry name" value="tRNA_endonuc-like_dom_sf"/>
</dbReference>
<dbReference type="InterPro" id="IPR003509">
    <property type="entry name" value="UPF0102_YraN-like"/>
</dbReference>
<dbReference type="PANTHER" id="PTHR34039">
    <property type="entry name" value="UPF0102 PROTEIN YRAN"/>
    <property type="match status" value="1"/>
</dbReference>
<dbReference type="PANTHER" id="PTHR34039:SF1">
    <property type="entry name" value="UPF0102 PROTEIN YRAN"/>
    <property type="match status" value="1"/>
</dbReference>
<dbReference type="Pfam" id="PF02021">
    <property type="entry name" value="UPF0102"/>
    <property type="match status" value="1"/>
</dbReference>
<dbReference type="SUPFAM" id="SSF52980">
    <property type="entry name" value="Restriction endonuclease-like"/>
    <property type="match status" value="1"/>
</dbReference>
<comment type="similarity">
    <text evidence="1">Belongs to the UPF0102 family.</text>
</comment>
<evidence type="ECO:0000255" key="1">
    <source>
        <dbReference type="HAMAP-Rule" id="MF_00048"/>
    </source>
</evidence>